<accession>Q50744</accession>
<accession>D9PUN5</accession>
<reference key="1">
    <citation type="journal article" date="1995" name="Eur. J. Biochem.">
        <title>Coenzyme F420-dependent N5,N10-methylenetetrahydromethanopterin reductase (Mer) from Methanobacterium thermoautotrophicum strain Marburg -- cloning, sequencing, transcriptional analysis, and functional expression in Escherichia coli of the mer gene.</title>
        <authorList>
            <person name="Vaupel M."/>
            <person name="Thauer R.K."/>
        </authorList>
    </citation>
    <scope>NUCLEOTIDE SEQUENCE [GENOMIC DNA]</scope>
    <source>
        <strain>ATCC BAA-927 / DSM 2133 / JCM 14651 / NBRC 100331 / OCM 82 / Marburg</strain>
    </source>
</reference>
<reference key="2">
    <citation type="journal article" date="2010" name="J. Bacteriol.">
        <title>Complete genome sequence of Methanothermobacter marburgensis, a methanoarchaeon model organism.</title>
        <authorList>
            <person name="Liesegang H."/>
            <person name="Kaster A.K."/>
            <person name="Wiezer A."/>
            <person name="Goenrich M."/>
            <person name="Wollherr A."/>
            <person name="Seedorf H."/>
            <person name="Gottschalk G."/>
            <person name="Thauer R.K."/>
        </authorList>
    </citation>
    <scope>NUCLEOTIDE SEQUENCE [LARGE SCALE GENOMIC DNA]</scope>
    <source>
        <strain>ATCC BAA-927 / DSM 2133 / JCM 14651 / NBRC 100331 / OCM 82 / Marburg</strain>
    </source>
</reference>
<reference key="3">
    <citation type="journal article" date="1991" name="Arch. Microbiol.">
        <title>Purification and properties of N5,N10-methylenetetrahydromethanopterin reductase (coenzyme F420-dependent) from the extreme thermophile Methanopyrus kandleri.</title>
        <authorList>
            <person name="Ma K."/>
            <person name="Linder D."/>
            <person name="Stetter K.O."/>
            <person name="Thauer R.K."/>
        </authorList>
    </citation>
    <scope>PROTEIN SEQUENCE OF 1-31</scope>
    <source>
        <strain>ATCC BAA-927 / DSM 2133 / JCM 14651 / NBRC 100331 / OCM 82 / Marburg</strain>
    </source>
</reference>
<reference key="4">
    <citation type="journal article" date="1990" name="Eur. J. Biochem.">
        <title>Purification and properties of N5, N10-methylenetetrahydromethanopterin reductase from Methanobacterium thermoautotrophicum (strain Marburg).</title>
        <authorList>
            <person name="Ma K."/>
            <person name="Thauer R.K."/>
        </authorList>
    </citation>
    <scope>FUNCTION</scope>
    <scope>CATALYTIC ACTIVITY</scope>
    <scope>BIOPHYSICOCHEMICAL PROPERTIES</scope>
    <scope>PATHWAY</scope>
    <scope>SUBUNIT</scope>
    <scope>SUBCELLULAR LOCATION</scope>
    <source>
        <strain>ATCC BAA-927 / DSM 2133 / JCM 14651 / NBRC 100331 / OCM 82 / Marburg</strain>
    </source>
</reference>
<reference key="5">
    <citation type="journal article" date="2000" name="J. Mol. Biol.">
        <title>Structure of coenzyme F(420) dependent methylenetetrahydromethanopterin reductase from two methanogenic archaea.</title>
        <authorList>
            <person name="Shima S."/>
            <person name="Warkentin E."/>
            <person name="Grabarse W."/>
            <person name="Sordel M."/>
            <person name="Wicke M."/>
            <person name="Thauer R.K."/>
            <person name="Ermler U."/>
        </authorList>
    </citation>
    <scope>X-RAY CRYSTALLOGRAPHY (2.0 ANGSTROMS)</scope>
    <source>
        <strain>ATCC BAA-927 / DSM 2133 / JCM 14651 / NBRC 100331 / OCM 82 / Marburg</strain>
    </source>
</reference>
<dbReference type="EC" id="1.5.98.2" evidence="1"/>
<dbReference type="EMBL" id="X86477">
    <property type="protein sequence ID" value="CAA60203.1"/>
    <property type="molecule type" value="Genomic_DNA"/>
</dbReference>
<dbReference type="EMBL" id="CP001710">
    <property type="protein sequence ID" value="ADL57933.1"/>
    <property type="molecule type" value="Genomic_DNA"/>
</dbReference>
<dbReference type="PIR" id="S66529">
    <property type="entry name" value="S66529"/>
</dbReference>
<dbReference type="RefSeq" id="WP_013295160.1">
    <property type="nucleotide sequence ID" value="NC_014408.1"/>
</dbReference>
<dbReference type="PDB" id="1F07">
    <property type="method" value="X-ray"/>
    <property type="resolution" value="2.00 A"/>
    <property type="chains" value="A/B/C/D=1-321"/>
</dbReference>
<dbReference type="PDBsum" id="1F07"/>
<dbReference type="SMR" id="Q50744"/>
<dbReference type="STRING" id="79929.MTBMA_c03270"/>
<dbReference type="PaxDb" id="79929-MTBMA_c03270"/>
<dbReference type="GeneID" id="77399110"/>
<dbReference type="GeneID" id="9704033"/>
<dbReference type="KEGG" id="mmg:MTBMA_c03270"/>
<dbReference type="PATRIC" id="fig|79929.8.peg.321"/>
<dbReference type="HOGENOM" id="CLU_027853_5_3_2"/>
<dbReference type="OrthoDB" id="213164at2157"/>
<dbReference type="BRENDA" id="1.5.98.2">
    <property type="organism ID" value="7427"/>
</dbReference>
<dbReference type="UniPathway" id="UPA00640">
    <property type="reaction ID" value="UER00697"/>
</dbReference>
<dbReference type="EvolutionaryTrace" id="Q50744"/>
<dbReference type="Proteomes" id="UP000000345">
    <property type="component" value="Chromosome"/>
</dbReference>
<dbReference type="GO" id="GO:0005737">
    <property type="term" value="C:cytoplasm"/>
    <property type="evidence" value="ECO:0007669"/>
    <property type="project" value="UniProtKB-SubCell"/>
</dbReference>
<dbReference type="GO" id="GO:0018537">
    <property type="term" value="F:coenzyme F420-dependent N5,N10-methenyltetrahydromethanopterin reductase activity"/>
    <property type="evidence" value="ECO:0000314"/>
    <property type="project" value="MENGO"/>
</dbReference>
<dbReference type="GO" id="GO:0016705">
    <property type="term" value="F:oxidoreductase activity, acting on paired donors, with incorporation or reduction of molecular oxygen"/>
    <property type="evidence" value="ECO:0007669"/>
    <property type="project" value="InterPro"/>
</dbReference>
<dbReference type="GO" id="GO:0019386">
    <property type="term" value="P:methanogenesis, from carbon dioxide"/>
    <property type="evidence" value="ECO:0007669"/>
    <property type="project" value="UniProtKB-UniRule"/>
</dbReference>
<dbReference type="GO" id="GO:0006730">
    <property type="term" value="P:one-carbon metabolic process"/>
    <property type="evidence" value="ECO:0007669"/>
    <property type="project" value="UniProtKB-UniRule"/>
</dbReference>
<dbReference type="CDD" id="cd01097">
    <property type="entry name" value="Tetrahydromethanopterin_reductase"/>
    <property type="match status" value="1"/>
</dbReference>
<dbReference type="FunFam" id="3.20.20.30:FF:000027">
    <property type="entry name" value="5,10-methylenetetrahydromethanopterin reductase"/>
    <property type="match status" value="1"/>
</dbReference>
<dbReference type="Gene3D" id="3.20.20.30">
    <property type="entry name" value="Luciferase-like domain"/>
    <property type="match status" value="1"/>
</dbReference>
<dbReference type="HAMAP" id="MF_01091">
    <property type="entry name" value="F420_mer"/>
    <property type="match status" value="1"/>
</dbReference>
<dbReference type="InterPro" id="IPR050564">
    <property type="entry name" value="F420-G6PD/mer"/>
</dbReference>
<dbReference type="InterPro" id="IPR011251">
    <property type="entry name" value="Luciferase-like_dom"/>
</dbReference>
<dbReference type="InterPro" id="IPR036661">
    <property type="entry name" value="Luciferase-like_sf"/>
</dbReference>
<dbReference type="InterPro" id="IPR019946">
    <property type="entry name" value="MeH4methanopterin_reductase"/>
</dbReference>
<dbReference type="NCBIfam" id="TIGR03555">
    <property type="entry name" value="F420_mer"/>
    <property type="match status" value="1"/>
</dbReference>
<dbReference type="NCBIfam" id="NF002619">
    <property type="entry name" value="PRK02271.1"/>
    <property type="match status" value="1"/>
</dbReference>
<dbReference type="PANTHER" id="PTHR43244">
    <property type="match status" value="1"/>
</dbReference>
<dbReference type="PANTHER" id="PTHR43244:SF1">
    <property type="entry name" value="5,10-METHYLENETETRAHYDROMETHANOPTERIN REDUCTASE"/>
    <property type="match status" value="1"/>
</dbReference>
<dbReference type="Pfam" id="PF00296">
    <property type="entry name" value="Bac_luciferase"/>
    <property type="match status" value="1"/>
</dbReference>
<dbReference type="SUPFAM" id="SSF51679">
    <property type="entry name" value="Bacterial luciferase-like"/>
    <property type="match status" value="1"/>
</dbReference>
<name>MER_METTM</name>
<keyword id="KW-0002">3D-structure</keyword>
<keyword id="KW-0963">Cytoplasm</keyword>
<keyword id="KW-0903">Direct protein sequencing</keyword>
<keyword id="KW-0484">Methanogenesis</keyword>
<keyword id="KW-0554">One-carbon metabolism</keyword>
<keyword id="KW-0560">Oxidoreductase</keyword>
<proteinExistence type="evidence at protein level"/>
<sequence>MKFGIEFVPNEPIEKIVKLVKLAEDVGFEYAWITDHYNNKNVYETLALIAEGTETIKLGPGVTNPYVRSPAITASAIATLDELSNGRATLGIGPGDKATFDALGIEWVKPVSTIRDAIAMMRTLLAGEKTESGAQLMGVKAVQEKIPIYMGAQGPMMLKTAGEISDGALINASNPKDFEAAVPLIKEGAEAAGKSIADIDVAAYTCCSIDEDAAAAANAAKIVVAFIAAGSPPPVFERHGLPADTGKKFGELLGKGDFGGAIGAVDDALMEAFSVVGTPDEFIPKIEALGEMGVTQYVAGSPIGPDKEKSIKLLGEVIASF</sequence>
<gene>
    <name evidence="2" type="primary">mer</name>
    <name type="ordered locus">MTBMA_c03270</name>
</gene>
<organism>
    <name type="scientific">Methanothermobacter marburgensis (strain ATCC BAA-927 / DSM 2133 / JCM 14651 / NBRC 100331 / OCM 82 / Marburg)</name>
    <name type="common">Methanobacterium thermoautotrophicum</name>
    <dbReference type="NCBI Taxonomy" id="79929"/>
    <lineage>
        <taxon>Archaea</taxon>
        <taxon>Methanobacteriati</taxon>
        <taxon>Methanobacteriota</taxon>
        <taxon>Methanomada group</taxon>
        <taxon>Methanobacteria</taxon>
        <taxon>Methanobacteriales</taxon>
        <taxon>Methanobacteriaceae</taxon>
        <taxon>Methanothermobacter</taxon>
    </lineage>
</organism>
<protein>
    <recommendedName>
        <fullName evidence="3">5,10-methylenetetrahydromethanopterin reductase</fullName>
        <ecNumber evidence="1">1.5.98.2</ecNumber>
    </recommendedName>
    <alternativeName>
        <fullName evidence="2">Coenzyme F420-dependent N(5),N(10)-methylenetetrahydromethanopterin reductase</fullName>
    </alternativeName>
    <alternativeName>
        <fullName evidence="3">Methylene-H(4)MPT reductase</fullName>
    </alternativeName>
</protein>
<comment type="function">
    <text evidence="1">Catalyzes the reversible reduction of methylene-H(4)MPT to methyl-H(4)MPT.</text>
</comment>
<comment type="catalytic activity">
    <reaction evidence="1">
        <text>5-methyl-5,6,7,8-tetrahydromethanopterin + oxidized coenzyme F420-(gamma-L-Glu)(n) + H(+) = 5,10-methylenetetrahydromethanopterin + reduced coenzyme F420-(gamma-L-Glu)(n)</text>
        <dbReference type="Rhea" id="RHEA:21144"/>
        <dbReference type="Rhea" id="RHEA-COMP:12939"/>
        <dbReference type="Rhea" id="RHEA-COMP:14378"/>
        <dbReference type="ChEBI" id="CHEBI:15378"/>
        <dbReference type="ChEBI" id="CHEBI:57818"/>
        <dbReference type="ChEBI" id="CHEBI:58116"/>
        <dbReference type="ChEBI" id="CHEBI:133980"/>
        <dbReference type="ChEBI" id="CHEBI:139511"/>
        <dbReference type="EC" id="1.5.98.2"/>
    </reaction>
</comment>
<comment type="biophysicochemical properties">
    <kinetics>
        <KM evidence="1">0.3 mM for methylene-H(4)MPT</KM>
        <KM evidence="1">3 uM for reduced coenzyme F420</KM>
        <Vmax evidence="1">6000.0 umol/min/mg enzyme</Vmax>
        <text evidence="1">kcat is 3600 sec(-1).</text>
    </kinetics>
    <phDependence>
        <text evidence="1">Optimum pH is 7.0.</text>
    </phDependence>
</comment>
<comment type="pathway">
    <text evidence="1">One-carbon metabolism; methanogenesis from CO(2); methyl-coenzyme M from 5,10-methylene-5,6,7,8-tetrahydromethanopterin: step 1/2.</text>
</comment>
<comment type="subunit">
    <text evidence="1">Homotetramer.</text>
</comment>
<comment type="subcellular location">
    <subcellularLocation>
        <location evidence="1">Cytoplasm</location>
    </subcellularLocation>
</comment>
<comment type="similarity">
    <text evidence="3">Belongs to the mer family.</text>
</comment>
<feature type="chain" id="PRO_0000084812" description="5,10-methylenetetrahydromethanopterin reductase">
    <location>
        <begin position="1"/>
        <end position="321"/>
    </location>
</feature>
<feature type="sequence conflict" description="In Ref. 3; AA sequence." evidence="3" ref="3">
    <original>K</original>
    <variation>W</variation>
    <location>
        <position position="15"/>
    </location>
</feature>
<feature type="strand" evidence="4">
    <location>
        <begin position="2"/>
        <end position="7"/>
    </location>
</feature>
<feature type="strand" evidence="4">
    <location>
        <begin position="9"/>
        <end position="11"/>
    </location>
</feature>
<feature type="helix" evidence="4">
    <location>
        <begin position="13"/>
        <end position="25"/>
    </location>
</feature>
<feature type="strand" evidence="4">
    <location>
        <begin position="30"/>
        <end position="33"/>
    </location>
</feature>
<feature type="helix" evidence="4">
    <location>
        <begin position="42"/>
        <end position="51"/>
    </location>
</feature>
<feature type="strand" evidence="4">
    <location>
        <begin position="57"/>
        <end position="63"/>
    </location>
</feature>
<feature type="strand" evidence="4">
    <location>
        <begin position="65"/>
        <end position="68"/>
    </location>
</feature>
<feature type="helix" evidence="4">
    <location>
        <begin position="70"/>
        <end position="83"/>
    </location>
</feature>
<feature type="strand" evidence="4">
    <location>
        <begin position="90"/>
        <end position="92"/>
    </location>
</feature>
<feature type="helix" evidence="4">
    <location>
        <begin position="97"/>
        <end position="102"/>
    </location>
</feature>
<feature type="helix" evidence="4">
    <location>
        <begin position="110"/>
        <end position="125"/>
    </location>
</feature>
<feature type="strand" evidence="4">
    <location>
        <begin position="142"/>
        <end position="145"/>
    </location>
</feature>
<feature type="strand" evidence="4">
    <location>
        <begin position="148"/>
        <end position="151"/>
    </location>
</feature>
<feature type="helix" evidence="4">
    <location>
        <begin position="155"/>
        <end position="164"/>
    </location>
</feature>
<feature type="strand" evidence="4">
    <location>
        <begin position="166"/>
        <end position="170"/>
    </location>
</feature>
<feature type="helix" evidence="4">
    <location>
        <begin position="175"/>
        <end position="191"/>
    </location>
</feature>
<feature type="helix" evidence="4">
    <location>
        <begin position="196"/>
        <end position="198"/>
    </location>
</feature>
<feature type="strand" evidence="4">
    <location>
        <begin position="199"/>
        <end position="209"/>
    </location>
</feature>
<feature type="helix" evidence="4">
    <location>
        <begin position="213"/>
        <end position="229"/>
    </location>
</feature>
<feature type="helix" evidence="4">
    <location>
        <begin position="233"/>
        <end position="238"/>
    </location>
</feature>
<feature type="helix" evidence="4">
    <location>
        <begin position="245"/>
        <end position="253"/>
    </location>
</feature>
<feature type="turn" evidence="4">
    <location>
        <begin position="254"/>
        <end position="256"/>
    </location>
</feature>
<feature type="helix" evidence="4">
    <location>
        <begin position="258"/>
        <end position="263"/>
    </location>
</feature>
<feature type="helix" evidence="4">
    <location>
        <begin position="267"/>
        <end position="273"/>
    </location>
</feature>
<feature type="strand" evidence="4">
    <location>
        <begin position="275"/>
        <end position="277"/>
    </location>
</feature>
<feature type="helix" evidence="4">
    <location>
        <begin position="279"/>
        <end position="291"/>
    </location>
</feature>
<feature type="strand" evidence="4">
    <location>
        <begin position="296"/>
        <end position="303"/>
    </location>
</feature>
<feature type="helix" evidence="4">
    <location>
        <begin position="307"/>
        <end position="319"/>
    </location>
</feature>
<evidence type="ECO:0000269" key="1">
    <source>
    </source>
</evidence>
<evidence type="ECO:0000303" key="2">
    <source>
    </source>
</evidence>
<evidence type="ECO:0000305" key="3"/>
<evidence type="ECO:0007829" key="4">
    <source>
        <dbReference type="PDB" id="1F07"/>
    </source>
</evidence>